<gene>
    <name evidence="1" type="primary">rpsI</name>
    <name type="ordered locus">SaurJH1_2285</name>
</gene>
<reference key="1">
    <citation type="submission" date="2007-06" db="EMBL/GenBank/DDBJ databases">
        <title>Complete sequence of chromosome of Staphylococcus aureus subsp. aureus JH1.</title>
        <authorList>
            <consortium name="US DOE Joint Genome Institute"/>
            <person name="Copeland A."/>
            <person name="Lucas S."/>
            <person name="Lapidus A."/>
            <person name="Barry K."/>
            <person name="Detter J.C."/>
            <person name="Glavina del Rio T."/>
            <person name="Hammon N."/>
            <person name="Israni S."/>
            <person name="Dalin E."/>
            <person name="Tice H."/>
            <person name="Pitluck S."/>
            <person name="Chain P."/>
            <person name="Malfatti S."/>
            <person name="Shin M."/>
            <person name="Vergez L."/>
            <person name="Schmutz J."/>
            <person name="Larimer F."/>
            <person name="Land M."/>
            <person name="Hauser L."/>
            <person name="Kyrpides N."/>
            <person name="Ivanova N."/>
            <person name="Tomasz A."/>
            <person name="Richardson P."/>
        </authorList>
    </citation>
    <scope>NUCLEOTIDE SEQUENCE [LARGE SCALE GENOMIC DNA]</scope>
    <source>
        <strain>JH1</strain>
    </source>
</reference>
<sequence>MAQVEYRGTGRRKNSVARVRLVPGEGNITVNNRDVREYLPFESLILDLNQPFDVTETKGNYDVLVNVHGGGFTGQAQAIRHGIARALLEADPEYRGSLKRAGLLTRDPRMKERKKPGLKAARRSPQFSKR</sequence>
<name>RS9_STAA2</name>
<proteinExistence type="inferred from homology"/>
<accession>A6U3U2</accession>
<evidence type="ECO:0000255" key="1">
    <source>
        <dbReference type="HAMAP-Rule" id="MF_00532"/>
    </source>
</evidence>
<evidence type="ECO:0000256" key="2">
    <source>
        <dbReference type="SAM" id="MobiDB-lite"/>
    </source>
</evidence>
<evidence type="ECO:0000305" key="3"/>
<feature type="chain" id="PRO_1000081838" description="Small ribosomal subunit protein uS9">
    <location>
        <begin position="1"/>
        <end position="130"/>
    </location>
</feature>
<feature type="region of interest" description="Disordered" evidence="2">
    <location>
        <begin position="99"/>
        <end position="130"/>
    </location>
</feature>
<feature type="compositionally biased region" description="Basic residues" evidence="2">
    <location>
        <begin position="111"/>
        <end position="130"/>
    </location>
</feature>
<dbReference type="EMBL" id="CP000736">
    <property type="protein sequence ID" value="ABR53110.1"/>
    <property type="molecule type" value="Genomic_DNA"/>
</dbReference>
<dbReference type="SMR" id="A6U3U2"/>
<dbReference type="KEGG" id="sah:SaurJH1_2285"/>
<dbReference type="HOGENOM" id="CLU_046483_2_1_9"/>
<dbReference type="GO" id="GO:0022627">
    <property type="term" value="C:cytosolic small ribosomal subunit"/>
    <property type="evidence" value="ECO:0007669"/>
    <property type="project" value="TreeGrafter"/>
</dbReference>
<dbReference type="GO" id="GO:0003723">
    <property type="term" value="F:RNA binding"/>
    <property type="evidence" value="ECO:0007669"/>
    <property type="project" value="TreeGrafter"/>
</dbReference>
<dbReference type="GO" id="GO:0003735">
    <property type="term" value="F:structural constituent of ribosome"/>
    <property type="evidence" value="ECO:0007669"/>
    <property type="project" value="InterPro"/>
</dbReference>
<dbReference type="GO" id="GO:0006412">
    <property type="term" value="P:translation"/>
    <property type="evidence" value="ECO:0007669"/>
    <property type="project" value="UniProtKB-UniRule"/>
</dbReference>
<dbReference type="FunFam" id="3.30.230.10:FF:000001">
    <property type="entry name" value="30S ribosomal protein S9"/>
    <property type="match status" value="1"/>
</dbReference>
<dbReference type="Gene3D" id="3.30.230.10">
    <property type="match status" value="1"/>
</dbReference>
<dbReference type="HAMAP" id="MF_00532_B">
    <property type="entry name" value="Ribosomal_uS9_B"/>
    <property type="match status" value="1"/>
</dbReference>
<dbReference type="InterPro" id="IPR020568">
    <property type="entry name" value="Ribosomal_Su5_D2-typ_SF"/>
</dbReference>
<dbReference type="InterPro" id="IPR000754">
    <property type="entry name" value="Ribosomal_uS9"/>
</dbReference>
<dbReference type="InterPro" id="IPR023035">
    <property type="entry name" value="Ribosomal_uS9_bac/plastid"/>
</dbReference>
<dbReference type="InterPro" id="IPR020574">
    <property type="entry name" value="Ribosomal_uS9_CS"/>
</dbReference>
<dbReference type="InterPro" id="IPR014721">
    <property type="entry name" value="Ribsml_uS5_D2-typ_fold_subgr"/>
</dbReference>
<dbReference type="NCBIfam" id="NF001099">
    <property type="entry name" value="PRK00132.1"/>
    <property type="match status" value="1"/>
</dbReference>
<dbReference type="PANTHER" id="PTHR21569">
    <property type="entry name" value="RIBOSOMAL PROTEIN S9"/>
    <property type="match status" value="1"/>
</dbReference>
<dbReference type="PANTHER" id="PTHR21569:SF1">
    <property type="entry name" value="SMALL RIBOSOMAL SUBUNIT PROTEIN US9M"/>
    <property type="match status" value="1"/>
</dbReference>
<dbReference type="Pfam" id="PF00380">
    <property type="entry name" value="Ribosomal_S9"/>
    <property type="match status" value="1"/>
</dbReference>
<dbReference type="SUPFAM" id="SSF54211">
    <property type="entry name" value="Ribosomal protein S5 domain 2-like"/>
    <property type="match status" value="1"/>
</dbReference>
<dbReference type="PROSITE" id="PS00360">
    <property type="entry name" value="RIBOSOMAL_S9"/>
    <property type="match status" value="1"/>
</dbReference>
<protein>
    <recommendedName>
        <fullName evidence="1">Small ribosomal subunit protein uS9</fullName>
    </recommendedName>
    <alternativeName>
        <fullName evidence="3">30S ribosomal protein S9</fullName>
    </alternativeName>
</protein>
<keyword id="KW-0687">Ribonucleoprotein</keyword>
<keyword id="KW-0689">Ribosomal protein</keyword>
<organism>
    <name type="scientific">Staphylococcus aureus (strain JH1)</name>
    <dbReference type="NCBI Taxonomy" id="359787"/>
    <lineage>
        <taxon>Bacteria</taxon>
        <taxon>Bacillati</taxon>
        <taxon>Bacillota</taxon>
        <taxon>Bacilli</taxon>
        <taxon>Bacillales</taxon>
        <taxon>Staphylococcaceae</taxon>
        <taxon>Staphylococcus</taxon>
    </lineage>
</organism>
<comment type="similarity">
    <text evidence="1">Belongs to the universal ribosomal protein uS9 family.</text>
</comment>